<sequence length="403" mass="45081">MAMVVNQWQENISADPGSQLQMCSQEPGGTPGTPSGSTPGNDALSGDKIPNVDCMVCGDKSSGKHYGQFTCEGCKSFFKRSVRRNLSYTCRGNRDCPIDQHHRNQCQYCRLKKCLKVGMRREAVQRGRMSNSQSSPGQYLSNGSDPYNGQPYLSGFISLLLRAEPYPTSRYGAQCMQSNNLMGIENICELAARLLFSAVEWAKNIPFFPDLQLMDQVALLRMSWSELFVLNAAQCSMPLHVAPLLAAAGLHASPMSAERVVAFMDHIRVFQEQVEKLKALQVDTAEYSCLKSIVLFTSDAMGLSDVAHVESIQEKSQCALEEYVRNQYPNQPNRFGRLLLRLPSLRIVSSPVIEQLFFVRLVGKTPIETLLRDMLLSGSSYNWPYMPVQRDRPISIHYNENGP</sequence>
<accession>Q06726</accession>
<proteinExistence type="evidence at transcript level"/>
<dbReference type="EMBL" id="X70300">
    <property type="protein sequence ID" value="CAA49781.1"/>
    <property type="molecule type" value="mRNA"/>
</dbReference>
<dbReference type="PIR" id="S35334">
    <property type="entry name" value="S35334"/>
</dbReference>
<dbReference type="RefSeq" id="NP_571261.1">
    <property type="nucleotide sequence ID" value="NM_131186.1"/>
</dbReference>
<dbReference type="SMR" id="Q06726"/>
<dbReference type="STRING" id="7955.ENSDARP00000040768"/>
<dbReference type="PaxDb" id="7955-ENSDARP00000040768"/>
<dbReference type="Ensembl" id="ENSDART00000040769">
    <property type="protein sequence ID" value="ENSDARP00000040768"/>
    <property type="gene ID" value="ENSDARG00000033172"/>
</dbReference>
<dbReference type="GeneID" id="30427"/>
<dbReference type="KEGG" id="dre:30427"/>
<dbReference type="AGR" id="ZFIN:ZDB-GENE-990415-253"/>
<dbReference type="CTD" id="30427"/>
<dbReference type="ZFIN" id="ZDB-GENE-990415-253">
    <property type="gene designation" value="nr2f5"/>
</dbReference>
<dbReference type="eggNOG" id="KOG3575">
    <property type="taxonomic scope" value="Eukaryota"/>
</dbReference>
<dbReference type="HOGENOM" id="CLU_007368_20_1_1"/>
<dbReference type="InParanoid" id="Q06726"/>
<dbReference type="OMA" id="WQESISA"/>
<dbReference type="OrthoDB" id="5873264at2759"/>
<dbReference type="PhylomeDB" id="Q06726"/>
<dbReference type="TreeFam" id="TF352097"/>
<dbReference type="PRO" id="PR:Q06726"/>
<dbReference type="Proteomes" id="UP000000437">
    <property type="component" value="Chromosome 16"/>
</dbReference>
<dbReference type="Bgee" id="ENSDARG00000033172">
    <property type="expression patterns" value="Expressed in somite and 71 other cell types or tissues"/>
</dbReference>
<dbReference type="ExpressionAtlas" id="Q06726">
    <property type="expression patterns" value="baseline and differential"/>
</dbReference>
<dbReference type="GO" id="GO:0005634">
    <property type="term" value="C:nucleus"/>
    <property type="evidence" value="ECO:0007669"/>
    <property type="project" value="UniProtKB-SubCell"/>
</dbReference>
<dbReference type="GO" id="GO:0004879">
    <property type="term" value="F:nuclear receptor activity"/>
    <property type="evidence" value="ECO:0000318"/>
    <property type="project" value="GO_Central"/>
</dbReference>
<dbReference type="GO" id="GO:0000978">
    <property type="term" value="F:RNA polymerase II cis-regulatory region sequence-specific DNA binding"/>
    <property type="evidence" value="ECO:0000318"/>
    <property type="project" value="GO_Central"/>
</dbReference>
<dbReference type="GO" id="GO:0008270">
    <property type="term" value="F:zinc ion binding"/>
    <property type="evidence" value="ECO:0007669"/>
    <property type="project" value="UniProtKB-KW"/>
</dbReference>
<dbReference type="GO" id="GO:0030154">
    <property type="term" value="P:cell differentiation"/>
    <property type="evidence" value="ECO:0000318"/>
    <property type="project" value="GO_Central"/>
</dbReference>
<dbReference type="GO" id="GO:1904888">
    <property type="term" value="P:cranial skeletal system development"/>
    <property type="evidence" value="ECO:0000315"/>
    <property type="project" value="ZFIN"/>
</dbReference>
<dbReference type="GO" id="GO:0007399">
    <property type="term" value="P:nervous system development"/>
    <property type="evidence" value="ECO:0000318"/>
    <property type="project" value="GO_Central"/>
</dbReference>
<dbReference type="GO" id="GO:0006357">
    <property type="term" value="P:regulation of transcription by RNA polymerase II"/>
    <property type="evidence" value="ECO:0000318"/>
    <property type="project" value="GO_Central"/>
</dbReference>
<dbReference type="GO" id="GO:0032526">
    <property type="term" value="P:response to retinoic acid"/>
    <property type="evidence" value="ECO:0000315"/>
    <property type="project" value="ZFIN"/>
</dbReference>
<dbReference type="GO" id="GO:0007601">
    <property type="term" value="P:visual perception"/>
    <property type="evidence" value="ECO:0007669"/>
    <property type="project" value="UniProtKB-KW"/>
</dbReference>
<dbReference type="CDD" id="cd06958">
    <property type="entry name" value="NR_DBD_COUP_TF"/>
    <property type="match status" value="1"/>
</dbReference>
<dbReference type="CDD" id="cd06948">
    <property type="entry name" value="NR_LBD_COUP-TF"/>
    <property type="match status" value="1"/>
</dbReference>
<dbReference type="FunFam" id="1.10.565.10:FF:000003">
    <property type="entry name" value="Coup transcription factor 2 isoform 1"/>
    <property type="match status" value="1"/>
</dbReference>
<dbReference type="FunFam" id="3.30.50.10:FF:000016">
    <property type="entry name" value="Nuclear receptor subfamily 2 group F member 1"/>
    <property type="match status" value="1"/>
</dbReference>
<dbReference type="Gene3D" id="3.30.50.10">
    <property type="entry name" value="Erythroid Transcription Factor GATA-1, subunit A"/>
    <property type="match status" value="1"/>
</dbReference>
<dbReference type="Gene3D" id="1.10.565.10">
    <property type="entry name" value="Retinoid X Receptor"/>
    <property type="match status" value="1"/>
</dbReference>
<dbReference type="InterPro" id="IPR035500">
    <property type="entry name" value="NHR-like_dom_sf"/>
</dbReference>
<dbReference type="InterPro" id="IPR000536">
    <property type="entry name" value="Nucl_hrmn_rcpt_lig-bd"/>
</dbReference>
<dbReference type="InterPro" id="IPR050274">
    <property type="entry name" value="Nuclear_hormone_rcpt_NR2"/>
</dbReference>
<dbReference type="InterPro" id="IPR001723">
    <property type="entry name" value="Nuclear_hrmn_rcpt"/>
</dbReference>
<dbReference type="InterPro" id="IPR001628">
    <property type="entry name" value="Znf_hrmn_rcpt"/>
</dbReference>
<dbReference type="InterPro" id="IPR013088">
    <property type="entry name" value="Znf_NHR/GATA"/>
</dbReference>
<dbReference type="PANTHER" id="PTHR24083">
    <property type="entry name" value="NUCLEAR HORMONE RECEPTOR"/>
    <property type="match status" value="1"/>
</dbReference>
<dbReference type="Pfam" id="PF00104">
    <property type="entry name" value="Hormone_recep"/>
    <property type="match status" value="1"/>
</dbReference>
<dbReference type="Pfam" id="PF00105">
    <property type="entry name" value="zf-C4"/>
    <property type="match status" value="1"/>
</dbReference>
<dbReference type="PRINTS" id="PR01282">
    <property type="entry name" value="COUPTNFACTOR"/>
</dbReference>
<dbReference type="PRINTS" id="PR00398">
    <property type="entry name" value="STRDHORMONER"/>
</dbReference>
<dbReference type="PRINTS" id="PR00047">
    <property type="entry name" value="STROIDFINGER"/>
</dbReference>
<dbReference type="SMART" id="SM00430">
    <property type="entry name" value="HOLI"/>
    <property type="match status" value="1"/>
</dbReference>
<dbReference type="SMART" id="SM00399">
    <property type="entry name" value="ZnF_C4"/>
    <property type="match status" value="1"/>
</dbReference>
<dbReference type="SUPFAM" id="SSF57716">
    <property type="entry name" value="Glucocorticoid receptor-like (DNA-binding domain)"/>
    <property type="match status" value="1"/>
</dbReference>
<dbReference type="SUPFAM" id="SSF48508">
    <property type="entry name" value="Nuclear receptor ligand-binding domain"/>
    <property type="match status" value="1"/>
</dbReference>
<dbReference type="PROSITE" id="PS51843">
    <property type="entry name" value="NR_LBD"/>
    <property type="match status" value="1"/>
</dbReference>
<dbReference type="PROSITE" id="PS00031">
    <property type="entry name" value="NUCLEAR_REC_DBD_1"/>
    <property type="match status" value="1"/>
</dbReference>
<dbReference type="PROSITE" id="PS51030">
    <property type="entry name" value="NUCLEAR_REC_DBD_2"/>
    <property type="match status" value="1"/>
</dbReference>
<gene>
    <name type="primary">nr2f5</name>
    <name type="synonym">svp46</name>
</gene>
<keyword id="KW-0238">DNA-binding</keyword>
<keyword id="KW-0479">Metal-binding</keyword>
<keyword id="KW-0539">Nucleus</keyword>
<keyword id="KW-0675">Receptor</keyword>
<keyword id="KW-1185">Reference proteome</keyword>
<keyword id="KW-0716">Sensory transduction</keyword>
<keyword id="KW-0804">Transcription</keyword>
<keyword id="KW-0805">Transcription regulation</keyword>
<keyword id="KW-0844">Vision</keyword>
<keyword id="KW-0862">Zinc</keyword>
<keyword id="KW-0863">Zinc-finger</keyword>
<reference key="1">
    <citation type="journal article" date="1993" name="EMBO J.">
        <title>Functional conservation of vertebrate seven-up related genes in neurogenesis and eye development.</title>
        <authorList>
            <person name="Fjose A."/>
            <person name="Nornes S."/>
            <person name="Weber U."/>
            <person name="Mlodzik M."/>
        </authorList>
    </citation>
    <scope>NUCLEOTIDE SEQUENCE [MRNA]</scope>
</reference>
<name>NR2F5_DANRE</name>
<feature type="chain" id="PRO_0000053612" description="Nuclear receptor subfamily 2 group F member 5">
    <location>
        <begin position="1"/>
        <end position="403"/>
    </location>
</feature>
<feature type="domain" description="NR LBD" evidence="2">
    <location>
        <begin position="152"/>
        <end position="378"/>
    </location>
</feature>
<feature type="DNA-binding region" description="Nuclear receptor" evidence="1">
    <location>
        <begin position="51"/>
        <end position="126"/>
    </location>
</feature>
<feature type="zinc finger region" description="NR C4-type" evidence="1">
    <location>
        <begin position="54"/>
        <end position="74"/>
    </location>
</feature>
<feature type="zinc finger region" description="NR C4-type" evidence="1">
    <location>
        <begin position="90"/>
        <end position="114"/>
    </location>
</feature>
<feature type="region of interest" description="Disordered" evidence="3">
    <location>
        <begin position="16"/>
        <end position="44"/>
    </location>
</feature>
<organism>
    <name type="scientific">Danio rerio</name>
    <name type="common">Zebrafish</name>
    <name type="synonym">Brachydanio rerio</name>
    <dbReference type="NCBI Taxonomy" id="7955"/>
    <lineage>
        <taxon>Eukaryota</taxon>
        <taxon>Metazoa</taxon>
        <taxon>Chordata</taxon>
        <taxon>Craniata</taxon>
        <taxon>Vertebrata</taxon>
        <taxon>Euteleostomi</taxon>
        <taxon>Actinopterygii</taxon>
        <taxon>Neopterygii</taxon>
        <taxon>Teleostei</taxon>
        <taxon>Ostariophysi</taxon>
        <taxon>Cypriniformes</taxon>
        <taxon>Danionidae</taxon>
        <taxon>Danioninae</taxon>
        <taxon>Danio</taxon>
    </lineage>
</organism>
<protein>
    <recommendedName>
        <fullName>Nuclear receptor subfamily 2 group F member 5</fullName>
    </recommendedName>
    <alternativeName>
        <fullName>Steroid receptor homolog SVP 46</fullName>
    </alternativeName>
</protein>
<evidence type="ECO:0000255" key="1">
    <source>
        <dbReference type="PROSITE-ProRule" id="PRU00407"/>
    </source>
</evidence>
<evidence type="ECO:0000255" key="2">
    <source>
        <dbReference type="PROSITE-ProRule" id="PRU01189"/>
    </source>
</evidence>
<evidence type="ECO:0000256" key="3">
    <source>
        <dbReference type="SAM" id="MobiDB-lite"/>
    </source>
</evidence>
<evidence type="ECO:0000305" key="4"/>
<comment type="function">
    <text>Putative receptor that is required in photoreceptor cells precursors during eye development.</text>
</comment>
<comment type="subcellular location">
    <subcellularLocation>
        <location evidence="1">Nucleus</location>
    </subcellularLocation>
</comment>
<comment type="similarity">
    <text evidence="4">Belongs to the nuclear hormone receptor family. NR2 subfamily.</text>
</comment>